<reference key="1">
    <citation type="journal article" date="2007" name="Nat. Biotechnol.">
        <title>Complete genome sequence of the myxobacterium Sorangium cellulosum.</title>
        <authorList>
            <person name="Schneiker S."/>
            <person name="Perlova O."/>
            <person name="Kaiser O."/>
            <person name="Gerth K."/>
            <person name="Alici A."/>
            <person name="Altmeyer M.O."/>
            <person name="Bartels D."/>
            <person name="Bekel T."/>
            <person name="Beyer S."/>
            <person name="Bode E."/>
            <person name="Bode H.B."/>
            <person name="Bolten C.J."/>
            <person name="Choudhuri J.V."/>
            <person name="Doss S."/>
            <person name="Elnakady Y.A."/>
            <person name="Frank B."/>
            <person name="Gaigalat L."/>
            <person name="Goesmann A."/>
            <person name="Groeger C."/>
            <person name="Gross F."/>
            <person name="Jelsbak L."/>
            <person name="Jelsbak L."/>
            <person name="Kalinowski J."/>
            <person name="Kegler C."/>
            <person name="Knauber T."/>
            <person name="Konietzny S."/>
            <person name="Kopp M."/>
            <person name="Krause L."/>
            <person name="Krug D."/>
            <person name="Linke B."/>
            <person name="Mahmud T."/>
            <person name="Martinez-Arias R."/>
            <person name="McHardy A.C."/>
            <person name="Merai M."/>
            <person name="Meyer F."/>
            <person name="Mormann S."/>
            <person name="Munoz-Dorado J."/>
            <person name="Perez J."/>
            <person name="Pradella S."/>
            <person name="Rachid S."/>
            <person name="Raddatz G."/>
            <person name="Rosenau F."/>
            <person name="Rueckert C."/>
            <person name="Sasse F."/>
            <person name="Scharfe M."/>
            <person name="Schuster S.C."/>
            <person name="Suen G."/>
            <person name="Treuner-Lange A."/>
            <person name="Velicer G.J."/>
            <person name="Vorholter F.-J."/>
            <person name="Weissman K.J."/>
            <person name="Welch R.D."/>
            <person name="Wenzel S.C."/>
            <person name="Whitworth D.E."/>
            <person name="Wilhelm S."/>
            <person name="Wittmann C."/>
            <person name="Bloecker H."/>
            <person name="Puehler A."/>
            <person name="Mueller R."/>
        </authorList>
    </citation>
    <scope>NUCLEOTIDE SEQUENCE [LARGE SCALE GENOMIC DNA]</scope>
    <source>
        <strain>So ce56</strain>
    </source>
</reference>
<reference key="2">
    <citation type="journal article" date="2009" name="J. Biol. Chem.">
        <title>Genome mining in Sorangium cellulosum So ce56: identification and characterization of the homologous electron transfer proteins of a myxobacterial cytochrome P450.</title>
        <authorList>
            <person name="Ewen K.M."/>
            <person name="Hannemann F."/>
            <person name="Khatri Y."/>
            <person name="Perlova O."/>
            <person name="Kappl R."/>
            <person name="Krug D."/>
            <person name="Huettermann J."/>
            <person name="Mueller R."/>
            <person name="Bernhardt R."/>
        </authorList>
    </citation>
    <scope>FUNCTION</scope>
    <scope>BIOPHYSICOCHEMICAL PROPERTIES</scope>
    <source>
        <strain>So ce56</strain>
    </source>
</reference>
<reference key="3">
    <citation type="journal article" date="2016" name="ChemBioChem">
        <title>Substrate hunting for the myxobacterial CYP260A1 revealed new 1alpha-hydroxylated products from C-19 steroids.</title>
        <authorList>
            <person name="Khatri Y."/>
            <person name="Ringle M."/>
            <person name="Lisurek M."/>
            <person name="von Kries J.P."/>
            <person name="Zapp J."/>
            <person name="Bernhardt R."/>
        </authorList>
    </citation>
    <scope>FUNCTION</scope>
    <scope>CATALYTIC ACTIVITY</scope>
    <scope>BIOPHYSICOCHEMICAL PROPERTIES</scope>
    <source>
        <strain>So ce56</strain>
    </source>
</reference>
<reference evidence="8" key="4">
    <citation type="journal article" date="2016" name="FEBS Lett.">
        <title>Structural characterization of CYP260A1 from Sorangium cellulosum to investigate the 1alpha-hydroxylation of a mineralocorticoid.</title>
        <authorList>
            <person name="Khatri Y."/>
            <person name="Carius Y."/>
            <person name="Ringle M."/>
            <person name="Lancaster C.R."/>
            <person name="Bernhardt R."/>
        </authorList>
    </citation>
    <scope>X-RAY CRYSTALLOGRAPHY (2.67 ANGSTROMS) IN COMPLEX WITH HEME B</scope>
    <scope>FUNCTION</scope>
    <scope>COFACTOR</scope>
    <scope>BIOPHYSICOCHEMICAL PROPERTIES</scope>
    <scope>MUTAGENESIS OF SER-276</scope>
    <source>
        <strain>So ce56</strain>
    </source>
</reference>
<reference evidence="9 10 11 12" key="5">
    <citation type="journal article" date="2018" name="ACS Chem. Biol.">
        <title>Structure-based engineering of steroidogenic CYP260A1 for stereo- and regioselective hydroxylation of progesterone.</title>
        <authorList>
            <person name="Khatri Y."/>
            <person name="Jozwik I.K."/>
            <person name="Ringle M."/>
            <person name="Ionescu I.A."/>
            <person name="Litzenburger M."/>
            <person name="Hutter M.C."/>
            <person name="Thunnissen A.W.H."/>
            <person name="Bernhardt R."/>
        </authorList>
    </citation>
    <scope>X-RAY CRYSTALLOGRAPHY (1.35 ANGSTROMS) OF MUTANTS ASN-276 AND ILE-276 IN COMPLEXES WITH HEME B AND PROGESTERONE</scope>
    <scope>FUNCTION</scope>
    <scope>CATALYTIC ACTIVITY</scope>
    <scope>COFACTOR</scope>
    <scope>BIOPHYSICOCHEMICAL PROPERTIES</scope>
    <scope>BIOTECHNOLOGY</scope>
    <scope>MUTAGENESIS OF SER-276</scope>
    <source>
        <strain>So ce56</strain>
    </source>
</reference>
<comment type="function">
    <text evidence="1">Hydroxylase that can catalyze the in vitro conversion of the sesquiterpenoid nootkatone, a natural organic compound produced by some plants, to at least five hydrophilic products (PubMed:19696019). The native ferredoxin reductase FdR_B and either Fdx2 or Fdx8 ferredoxins can act as the redox partners for the conversion of nootkatone (PubMed:19696019).</text>
</comment>
<comment type="function">
    <text evidence="2 3 4">In addition, acts as a steroid 1alpha-hydroxylase, when associated in vitro with the surrogate redox partners bovine adrenodoxin (Adx) and adrenodoxin reductase (Adr) (PubMed:26478560, PubMed:27878817, PubMed:29509407). Acts on several C-19 steroid substrates, including testosterone and androstenedione, which are hydroxylated to 1alpha-hydroxytestosterone and 1alpha-hydroxyandrostenedione, respectively (PubMed:26478560, PubMed:29509407). Can use their derivatives testosterone-acetate and 11-oxoandrostenedione, but not vitamin D3 and 25-hydroxyvitamin D3 (PubMed:26478560). Also catalyzes the hydroxylation of the C-21 steroid 11-deoxycorticosterone to 1alpha-hydroxy-11-deoxycorticosterone (PubMed:27878817). Catalyzes the hydroxylation of the C-21 steroid progesterone, leading to the formation of seven products: two major (1alpha-hydroxyprogesterone and 17alpha-hydroxyprogesterone) and five minor products (PubMed:29509407).</text>
</comment>
<comment type="catalytic activity">
    <reaction evidence="2 4">
        <text>testosterone + 2 reduced [2Fe-2S]-[ferredoxin] + O2 + 2 H(+) = 1alpha-hydroxytestosterone + 2 oxidized [2Fe-2S]-[ferredoxin] + H2O</text>
        <dbReference type="Rhea" id="RHEA:50340"/>
        <dbReference type="Rhea" id="RHEA-COMP:10000"/>
        <dbReference type="Rhea" id="RHEA-COMP:10001"/>
        <dbReference type="ChEBI" id="CHEBI:15377"/>
        <dbReference type="ChEBI" id="CHEBI:15378"/>
        <dbReference type="ChEBI" id="CHEBI:15379"/>
        <dbReference type="ChEBI" id="CHEBI:17347"/>
        <dbReference type="ChEBI" id="CHEBI:33737"/>
        <dbReference type="ChEBI" id="CHEBI:33738"/>
        <dbReference type="ChEBI" id="CHEBI:132358"/>
        <dbReference type="EC" id="1.14.15.19"/>
    </reaction>
</comment>
<comment type="catalytic activity">
    <reaction evidence="2 4">
        <text>androst-4-ene-3,17-dione + 2 reduced [2Fe-2S]-[ferredoxin] + O2 + 2 H(+) = 1alpha-hydroxyandrost-4-ene-3,17-dione + 2 oxidized [2Fe-2S]-[ferredoxin] + H2O</text>
        <dbReference type="Rhea" id="RHEA:50812"/>
        <dbReference type="Rhea" id="RHEA-COMP:10000"/>
        <dbReference type="Rhea" id="RHEA-COMP:10001"/>
        <dbReference type="ChEBI" id="CHEBI:15377"/>
        <dbReference type="ChEBI" id="CHEBI:15378"/>
        <dbReference type="ChEBI" id="CHEBI:15379"/>
        <dbReference type="ChEBI" id="CHEBI:16422"/>
        <dbReference type="ChEBI" id="CHEBI:33737"/>
        <dbReference type="ChEBI" id="CHEBI:33738"/>
        <dbReference type="ChEBI" id="CHEBI:133778"/>
        <dbReference type="EC" id="1.14.15.19"/>
    </reaction>
</comment>
<comment type="cofactor">
    <cofactor evidence="3 4">
        <name>heme b</name>
        <dbReference type="ChEBI" id="CHEBI:60344"/>
    </cofactor>
</comment>
<comment type="biophysicochemical properties">
    <kinetics>
        <KM evidence="1">0.12 uM for nootkatone (in the presence of FdR_B and Fdx2)</KM>
        <KM evidence="1">0.54 uM for nootkatone (in the presence of FdR_B and Fdx8)</KM>
        <KM evidence="2">40 uM for testosterone</KM>
        <KM evidence="2">31 uM for androstenedione</KM>
        <KM evidence="3">25 uM for 11-deoxycorticosterone</KM>
        <KM evidence="4">124 uM for progesterone</KM>
        <text evidence="1">kcat is 0.70 sec(-1) with nootkatone as substrate (in the presence of FdR_B and Fdx2). kcat is 0.96 sec(-1) with nootkatone as substrate (in the presence of FdR_B and Fdx8).</text>
    </kinetics>
</comment>
<comment type="biotechnology">
    <text evidence="4">The production of regio- and stereoselectively hydroxylated steroids is of high chemical/pharmaceutical interest (PubMed:29509407). Mutagenesis can change the selectivity of cytochrome P450-mediated steroid hydroxylation, providing the basis for further experiments to engineer the biocatalyst toward novel steroid hydroxylation positions (PubMed:29509407).</text>
</comment>
<comment type="similarity">
    <text evidence="6">Belongs to the cytochrome P450 family.</text>
</comment>
<organism>
    <name type="scientific">Sorangium cellulosum (strain So ce56)</name>
    <name type="common">Polyangium cellulosum (strain So ce56)</name>
    <dbReference type="NCBI Taxonomy" id="448385"/>
    <lineage>
        <taxon>Bacteria</taxon>
        <taxon>Pseudomonadati</taxon>
        <taxon>Myxococcota</taxon>
        <taxon>Polyangia</taxon>
        <taxon>Polyangiales</taxon>
        <taxon>Polyangiaceae</taxon>
        <taxon>Sorangium</taxon>
    </lineage>
</organism>
<keyword id="KW-0002">3D-structure</keyword>
<keyword id="KW-0349">Heme</keyword>
<keyword id="KW-0408">Iron</keyword>
<keyword id="KW-0479">Metal-binding</keyword>
<keyword id="KW-0503">Monooxygenase</keyword>
<keyword id="KW-0560">Oxidoreductase</keyword>
<keyword id="KW-1185">Reference proteome</keyword>
<gene>
    <name evidence="7" type="ordered locus">sce1588</name>
</gene>
<accession>A9FDB7</accession>
<dbReference type="EC" id="1.14.15.19" evidence="2 4"/>
<dbReference type="EMBL" id="AM746676">
    <property type="protein sequence ID" value="CAN91746.1"/>
    <property type="molecule type" value="Genomic_DNA"/>
</dbReference>
<dbReference type="RefSeq" id="WP_012234223.1">
    <property type="nucleotide sequence ID" value="NC_010162.1"/>
</dbReference>
<dbReference type="PDB" id="5LIV">
    <property type="method" value="X-ray"/>
    <property type="resolution" value="2.67 A"/>
    <property type="chains" value="A/B/C/D=1-394"/>
</dbReference>
<dbReference type="PDB" id="6F85">
    <property type="method" value="X-ray"/>
    <property type="resolution" value="2.05 A"/>
    <property type="chains" value="A/B=1-394"/>
</dbReference>
<dbReference type="PDB" id="6F88">
    <property type="method" value="X-ray"/>
    <property type="resolution" value="1.75 A"/>
    <property type="chains" value="A/B=1-394"/>
</dbReference>
<dbReference type="PDB" id="6F8A">
    <property type="method" value="X-ray"/>
    <property type="resolution" value="1.35 A"/>
    <property type="chains" value="A/B=1-394"/>
</dbReference>
<dbReference type="PDB" id="6F8C">
    <property type="method" value="X-ray"/>
    <property type="resolution" value="1.90 A"/>
    <property type="chains" value="A/B=1-394"/>
</dbReference>
<dbReference type="PDBsum" id="5LIV"/>
<dbReference type="PDBsum" id="6F85"/>
<dbReference type="PDBsum" id="6F88"/>
<dbReference type="PDBsum" id="6F8A"/>
<dbReference type="PDBsum" id="6F8C"/>
<dbReference type="SMR" id="A9FDB7"/>
<dbReference type="STRING" id="448385.sce1588"/>
<dbReference type="KEGG" id="scl:sce1588"/>
<dbReference type="eggNOG" id="COG2124">
    <property type="taxonomic scope" value="Bacteria"/>
</dbReference>
<dbReference type="HOGENOM" id="CLU_033716_0_0_7"/>
<dbReference type="OrthoDB" id="4258484at2"/>
<dbReference type="BioCyc" id="MetaCyc:MONOMER-19752"/>
<dbReference type="BRENDA" id="1.14.15.19">
    <property type="organism ID" value="9327"/>
</dbReference>
<dbReference type="Proteomes" id="UP000002139">
    <property type="component" value="Chromosome"/>
</dbReference>
<dbReference type="GO" id="GO:0020037">
    <property type="term" value="F:heme binding"/>
    <property type="evidence" value="ECO:0007669"/>
    <property type="project" value="InterPro"/>
</dbReference>
<dbReference type="GO" id="GO:0005506">
    <property type="term" value="F:iron ion binding"/>
    <property type="evidence" value="ECO:0007669"/>
    <property type="project" value="InterPro"/>
</dbReference>
<dbReference type="GO" id="GO:0004497">
    <property type="term" value="F:monooxygenase activity"/>
    <property type="evidence" value="ECO:0007669"/>
    <property type="project" value="UniProtKB-KW"/>
</dbReference>
<dbReference type="GO" id="GO:0016705">
    <property type="term" value="F:oxidoreductase activity, acting on paired donors, with incorporation or reduction of molecular oxygen"/>
    <property type="evidence" value="ECO:0007669"/>
    <property type="project" value="InterPro"/>
</dbReference>
<dbReference type="CDD" id="cd20629">
    <property type="entry name" value="P450_pinF1-like"/>
    <property type="match status" value="1"/>
</dbReference>
<dbReference type="Gene3D" id="1.10.630.10">
    <property type="entry name" value="Cytochrome P450"/>
    <property type="match status" value="1"/>
</dbReference>
<dbReference type="InterPro" id="IPR001128">
    <property type="entry name" value="Cyt_P450"/>
</dbReference>
<dbReference type="InterPro" id="IPR002397">
    <property type="entry name" value="Cyt_P450_B"/>
</dbReference>
<dbReference type="InterPro" id="IPR017972">
    <property type="entry name" value="Cyt_P450_CS"/>
</dbReference>
<dbReference type="InterPro" id="IPR036396">
    <property type="entry name" value="Cyt_P450_sf"/>
</dbReference>
<dbReference type="PANTHER" id="PTHR46696:SF1">
    <property type="entry name" value="CYTOCHROME P450 YJIB-RELATED"/>
    <property type="match status" value="1"/>
</dbReference>
<dbReference type="PANTHER" id="PTHR46696">
    <property type="entry name" value="P450, PUTATIVE (EUROFUNG)-RELATED"/>
    <property type="match status" value="1"/>
</dbReference>
<dbReference type="Pfam" id="PF00067">
    <property type="entry name" value="p450"/>
    <property type="match status" value="1"/>
</dbReference>
<dbReference type="PRINTS" id="PR00359">
    <property type="entry name" value="BP450"/>
</dbReference>
<dbReference type="SUPFAM" id="SSF48264">
    <property type="entry name" value="Cytochrome P450"/>
    <property type="match status" value="1"/>
</dbReference>
<dbReference type="PROSITE" id="PS00086">
    <property type="entry name" value="CYTOCHROME_P450"/>
    <property type="match status" value="1"/>
</dbReference>
<protein>
    <recommendedName>
        <fullName evidence="6">C-19 steroid 1alpha-hydroxylase</fullName>
        <ecNumber evidence="2 4">1.14.15.19</ecNumber>
    </recommendedName>
    <alternativeName>
        <fullName evidence="5">Cytochrome P450 CYP260A1</fullName>
    </alternativeName>
</protein>
<proteinExistence type="evidence at protein level"/>
<name>CP260_SORC5</name>
<sequence>MDFPLANLFFVPSEDATAFGRRLRAAAQQAPIVFDTAFGMPILLRKSHITTAYRDTATFSTRMFQAGILNGGLAAMQGDEHARMRRVYNMFFLPRAVSQYEERFVRPISEQVVDRLAGKPRVDLLEDFAMELPRRVIGELFGFPAEKLHETDERVRAMLRGLVRMHDPAAVAESQRAYGETLGLITEVVERESRDTSDTLLGEILRTLKAEHMDTIEASRQIVLSLILGGYETTSWLVANTIHALLAHPDTLARVRQDPSLLPAAIEEGMRWCPSSFGVLRMVERDVRLDDQALSAGTVVCLAGIAGNYDETAYPSPEVYDIDRKPLPAANVFGGGAHFCVGAPLARMEARVGLQALLARFPGLRAVPEERPSFMYGAKDSVAHGPDKLPVLLH</sequence>
<evidence type="ECO:0000269" key="1">
    <source>
    </source>
</evidence>
<evidence type="ECO:0000269" key="2">
    <source>
    </source>
</evidence>
<evidence type="ECO:0000269" key="3">
    <source>
    </source>
</evidence>
<evidence type="ECO:0000269" key="4">
    <source>
    </source>
</evidence>
<evidence type="ECO:0000303" key="5">
    <source>
    </source>
</evidence>
<evidence type="ECO:0000305" key="6"/>
<evidence type="ECO:0000312" key="7">
    <source>
        <dbReference type="EMBL" id="CAN91746.1"/>
    </source>
</evidence>
<evidence type="ECO:0007744" key="8">
    <source>
        <dbReference type="PDB" id="5LIV"/>
    </source>
</evidence>
<evidence type="ECO:0007744" key="9">
    <source>
        <dbReference type="PDB" id="6F85"/>
    </source>
</evidence>
<evidence type="ECO:0007744" key="10">
    <source>
        <dbReference type="PDB" id="6F88"/>
    </source>
</evidence>
<evidence type="ECO:0007744" key="11">
    <source>
        <dbReference type="PDB" id="6F8A"/>
    </source>
</evidence>
<evidence type="ECO:0007744" key="12">
    <source>
        <dbReference type="PDB" id="6F8C"/>
    </source>
</evidence>
<evidence type="ECO:0007829" key="13">
    <source>
        <dbReference type="PDB" id="5LIV"/>
    </source>
</evidence>
<evidence type="ECO:0007829" key="14">
    <source>
        <dbReference type="PDB" id="6F85"/>
    </source>
</evidence>
<evidence type="ECO:0007829" key="15">
    <source>
        <dbReference type="PDB" id="6F88"/>
    </source>
</evidence>
<evidence type="ECO:0007829" key="16">
    <source>
        <dbReference type="PDB" id="6F8A"/>
    </source>
</evidence>
<evidence type="ECO:0007829" key="17">
    <source>
        <dbReference type="PDB" id="6F8C"/>
    </source>
</evidence>
<feature type="chain" id="PRO_0000459767" description="C-19 steroid 1alpha-hydroxylase">
    <location>
        <begin position="1"/>
        <end position="394"/>
    </location>
</feature>
<feature type="binding site" evidence="3 4 8 9 10 11 12">
    <location>
        <position position="81"/>
    </location>
    <ligand>
        <name>heme b</name>
        <dbReference type="ChEBI" id="CHEBI:60344"/>
    </ligand>
</feature>
<feature type="binding site" evidence="3 4 8 9 10 11 12">
    <location>
        <position position="85"/>
    </location>
    <ligand>
        <name>heme b</name>
        <dbReference type="ChEBI" id="CHEBI:60344"/>
    </ligand>
</feature>
<feature type="binding site" evidence="3 4 8 9 10 11 12">
    <location>
        <position position="281"/>
    </location>
    <ligand>
        <name>heme b</name>
        <dbReference type="ChEBI" id="CHEBI:60344"/>
    </ligand>
</feature>
<feature type="binding site" evidence="4 10 11 12">
    <location>
        <position position="335"/>
    </location>
    <ligand>
        <name>heme b</name>
        <dbReference type="ChEBI" id="CHEBI:60344"/>
    </ligand>
</feature>
<feature type="binding site" evidence="8 9 10 11 12">
    <location>
        <position position="338"/>
    </location>
    <ligand>
        <name>heme b</name>
        <dbReference type="ChEBI" id="CHEBI:60344"/>
    </ligand>
</feature>
<feature type="binding site" description="axial binding residue" evidence="3 4 8 9 10 11 12">
    <location>
        <position position="340"/>
    </location>
    <ligand>
        <name>heme b</name>
        <dbReference type="ChEBI" id="CHEBI:60344"/>
    </ligand>
    <ligandPart>
        <name>Fe</name>
        <dbReference type="ChEBI" id="CHEBI:18248"/>
    </ligandPart>
</feature>
<feature type="mutagenesis site" description="Affects the regioselectivity of substrate hydroxylation. Produces mainly 17alpha-hydroxyprogesterone with progesterone as substrate." evidence="4">
    <original>S</original>
    <variation>I</variation>
    <location>
        <position position="276"/>
    </location>
</feature>
<feature type="mutagenesis site" description="Affects the regioselectivity of substrate hydroxylation. Displays higher activity and selectivity for the formation of 1alpha-hydroxy-11-deoxycorticosterone with 11-deoxycorticosterone as substrate. Produces mainly 1alpha-hydroxyprogesterone with progesterone as substrate." evidence="3 4">
    <original>S</original>
    <variation>N</variation>
    <location>
        <position position="276"/>
    </location>
</feature>
<feature type="strand" evidence="16">
    <location>
        <begin position="13"/>
        <end position="15"/>
    </location>
</feature>
<feature type="helix" evidence="16">
    <location>
        <begin position="18"/>
        <end position="29"/>
    </location>
</feature>
<feature type="strand" evidence="16">
    <location>
        <begin position="31"/>
        <end position="35"/>
    </location>
</feature>
<feature type="turn" evidence="16">
    <location>
        <begin position="36"/>
        <end position="39"/>
    </location>
</feature>
<feature type="strand" evidence="16">
    <location>
        <begin position="40"/>
        <end position="43"/>
    </location>
</feature>
<feature type="helix" evidence="16">
    <location>
        <begin position="46"/>
        <end position="54"/>
    </location>
</feature>
<feature type="turn" evidence="16">
    <location>
        <begin position="56"/>
        <end position="58"/>
    </location>
</feature>
<feature type="strand" evidence="16">
    <location>
        <begin position="59"/>
        <end position="61"/>
    </location>
</feature>
<feature type="helix" evidence="16">
    <location>
        <begin position="62"/>
        <end position="66"/>
    </location>
</feature>
<feature type="turn" evidence="16">
    <location>
        <begin position="68"/>
        <end position="71"/>
    </location>
</feature>
<feature type="helix" evidence="15">
    <location>
        <begin position="73"/>
        <end position="75"/>
    </location>
</feature>
<feature type="helix" evidence="16">
    <location>
        <begin position="78"/>
        <end position="90"/>
    </location>
</feature>
<feature type="helix" evidence="16">
    <location>
        <begin position="94"/>
        <end position="103"/>
    </location>
</feature>
<feature type="helix" evidence="16">
    <location>
        <begin position="105"/>
        <end position="114"/>
    </location>
</feature>
<feature type="turn" evidence="16">
    <location>
        <begin position="115"/>
        <end position="118"/>
    </location>
</feature>
<feature type="strand" evidence="16">
    <location>
        <begin position="120"/>
        <end position="123"/>
    </location>
</feature>
<feature type="helix" evidence="16">
    <location>
        <begin position="124"/>
        <end position="127"/>
    </location>
</feature>
<feature type="turn" evidence="16">
    <location>
        <begin position="128"/>
        <end position="130"/>
    </location>
</feature>
<feature type="helix" evidence="16">
    <location>
        <begin position="131"/>
        <end position="141"/>
    </location>
</feature>
<feature type="helix" evidence="16">
    <location>
        <begin position="145"/>
        <end position="149"/>
    </location>
</feature>
<feature type="helix" evidence="16">
    <location>
        <begin position="152"/>
        <end position="160"/>
    </location>
</feature>
<feature type="turn" evidence="16">
    <location>
        <begin position="161"/>
        <end position="163"/>
    </location>
</feature>
<feature type="helix" evidence="16">
    <location>
        <begin position="168"/>
        <end position="179"/>
    </location>
</feature>
<feature type="helix" evidence="16">
    <location>
        <begin position="182"/>
        <end position="192"/>
    </location>
</feature>
<feature type="strand" evidence="13">
    <location>
        <begin position="194"/>
        <end position="196"/>
    </location>
</feature>
<feature type="helix" evidence="16">
    <location>
        <begin position="200"/>
        <end position="210"/>
    </location>
</feature>
<feature type="helix" evidence="16">
    <location>
        <begin position="216"/>
        <end position="228"/>
    </location>
</feature>
<feature type="turn" evidence="16">
    <location>
        <begin position="229"/>
        <end position="231"/>
    </location>
</feature>
<feature type="helix" evidence="16">
    <location>
        <begin position="232"/>
        <end position="246"/>
    </location>
</feature>
<feature type="helix" evidence="16">
    <location>
        <begin position="249"/>
        <end position="257"/>
    </location>
</feature>
<feature type="helix" evidence="16">
    <location>
        <begin position="259"/>
        <end position="261"/>
    </location>
</feature>
<feature type="helix" evidence="16">
    <location>
        <begin position="262"/>
        <end position="272"/>
    </location>
</feature>
<feature type="strand" evidence="16">
    <location>
        <begin position="279"/>
        <end position="283"/>
    </location>
</feature>
<feature type="strand" evidence="16">
    <location>
        <begin position="287"/>
        <end position="289"/>
    </location>
</feature>
<feature type="strand" evidence="16">
    <location>
        <begin position="292"/>
        <end position="294"/>
    </location>
</feature>
<feature type="strand" evidence="16">
    <location>
        <begin position="299"/>
        <end position="302"/>
    </location>
</feature>
<feature type="helix" evidence="16">
    <location>
        <begin position="304"/>
        <end position="309"/>
    </location>
</feature>
<feature type="turn" evidence="16">
    <location>
        <begin position="311"/>
        <end position="313"/>
    </location>
</feature>
<feature type="strand" evidence="16">
    <location>
        <begin position="314"/>
        <end position="316"/>
    </location>
</feature>
<feature type="helix" evidence="14">
    <location>
        <begin position="331"/>
        <end position="333"/>
    </location>
</feature>
<feature type="helix" evidence="16">
    <location>
        <begin position="336"/>
        <end position="338"/>
    </location>
</feature>
<feature type="helix" evidence="16">
    <location>
        <begin position="343"/>
        <end position="360"/>
    </location>
</feature>
<feature type="strand" evidence="17">
    <location>
        <begin position="368"/>
        <end position="370"/>
    </location>
</feature>
<feature type="strand" evidence="16">
    <location>
        <begin position="374"/>
        <end position="376"/>
    </location>
</feature>
<feature type="helix" evidence="16">
    <location>
        <begin position="378"/>
        <end position="380"/>
    </location>
</feature>
<feature type="strand" evidence="16">
    <location>
        <begin position="381"/>
        <end position="387"/>
    </location>
</feature>
<feature type="strand" evidence="16">
    <location>
        <begin position="390"/>
        <end position="392"/>
    </location>
</feature>